<keyword id="KW-0067">ATP-binding</keyword>
<keyword id="KW-0143">Chaperone</keyword>
<keyword id="KW-0963">Cytoplasm</keyword>
<keyword id="KW-0547">Nucleotide-binding</keyword>
<keyword id="KW-1185">Reference proteome</keyword>
<keyword id="KW-0346">Stress response</keyword>
<accession>A8F5A8</accession>
<organism>
    <name type="scientific">Pseudothermotoga lettingae (strain ATCC BAA-301 / DSM 14385 / NBRC 107922 / TMO)</name>
    <name type="common">Thermotoga lettingae</name>
    <dbReference type="NCBI Taxonomy" id="416591"/>
    <lineage>
        <taxon>Bacteria</taxon>
        <taxon>Thermotogati</taxon>
        <taxon>Thermotogota</taxon>
        <taxon>Thermotogae</taxon>
        <taxon>Thermotogales</taxon>
        <taxon>Thermotogaceae</taxon>
        <taxon>Pseudothermotoga</taxon>
    </lineage>
</organism>
<name>HSLU_PSELT</name>
<gene>
    <name evidence="1" type="primary">hslU</name>
    <name type="ordered locus">Tlet_0776</name>
</gene>
<proteinExistence type="inferred from homology"/>
<reference key="1">
    <citation type="submission" date="2007-08" db="EMBL/GenBank/DDBJ databases">
        <title>Complete sequence of Thermotoga lettingae TMO.</title>
        <authorList>
            <consortium name="US DOE Joint Genome Institute"/>
            <person name="Copeland A."/>
            <person name="Lucas S."/>
            <person name="Lapidus A."/>
            <person name="Barry K."/>
            <person name="Glavina del Rio T."/>
            <person name="Dalin E."/>
            <person name="Tice H."/>
            <person name="Pitluck S."/>
            <person name="Foster B."/>
            <person name="Bruce D."/>
            <person name="Schmutz J."/>
            <person name="Larimer F."/>
            <person name="Land M."/>
            <person name="Hauser L."/>
            <person name="Kyrpides N."/>
            <person name="Mikhailova N."/>
            <person name="Nelson K."/>
            <person name="Gogarten J.P."/>
            <person name="Noll K."/>
            <person name="Richardson P."/>
        </authorList>
    </citation>
    <scope>NUCLEOTIDE SEQUENCE [LARGE SCALE GENOMIC DNA]</scope>
    <source>
        <strain>ATCC BAA-301 / DSM 14385 / NBRC 107922 / TMO</strain>
    </source>
</reference>
<evidence type="ECO:0000255" key="1">
    <source>
        <dbReference type="HAMAP-Rule" id="MF_00249"/>
    </source>
</evidence>
<comment type="function">
    <text evidence="1">ATPase subunit of a proteasome-like degradation complex; this subunit has chaperone activity. The binding of ATP and its subsequent hydrolysis by HslU are essential for unfolding of protein substrates subsequently hydrolyzed by HslV. HslU recognizes the N-terminal part of its protein substrates and unfolds these before they are guided to HslV for hydrolysis.</text>
</comment>
<comment type="subunit">
    <text evidence="1">A double ring-shaped homohexamer of HslV is capped on each side by a ring-shaped HslU homohexamer. The assembly of the HslU/HslV complex is dependent on binding of ATP.</text>
</comment>
<comment type="subcellular location">
    <subcellularLocation>
        <location evidence="1">Cytoplasm</location>
    </subcellularLocation>
</comment>
<comment type="similarity">
    <text evidence="1">Belongs to the ClpX chaperone family. HslU subfamily.</text>
</comment>
<protein>
    <recommendedName>
        <fullName evidence="1">ATP-dependent protease ATPase subunit HslU</fullName>
    </recommendedName>
    <alternativeName>
        <fullName evidence="1">Unfoldase HslU</fullName>
    </alternativeName>
</protein>
<dbReference type="EMBL" id="CP000812">
    <property type="protein sequence ID" value="ABV33342.1"/>
    <property type="molecule type" value="Genomic_DNA"/>
</dbReference>
<dbReference type="RefSeq" id="WP_012002823.1">
    <property type="nucleotide sequence ID" value="NZ_BSDV01000001.1"/>
</dbReference>
<dbReference type="SMR" id="A8F5A8"/>
<dbReference type="STRING" id="416591.Tlet_0776"/>
<dbReference type="KEGG" id="tle:Tlet_0776"/>
<dbReference type="eggNOG" id="COG1220">
    <property type="taxonomic scope" value="Bacteria"/>
</dbReference>
<dbReference type="HOGENOM" id="CLU_033123_0_0_0"/>
<dbReference type="OrthoDB" id="9804062at2"/>
<dbReference type="Proteomes" id="UP000002016">
    <property type="component" value="Chromosome"/>
</dbReference>
<dbReference type="GO" id="GO:0009376">
    <property type="term" value="C:HslUV protease complex"/>
    <property type="evidence" value="ECO:0007669"/>
    <property type="project" value="UniProtKB-UniRule"/>
</dbReference>
<dbReference type="GO" id="GO:0005524">
    <property type="term" value="F:ATP binding"/>
    <property type="evidence" value="ECO:0007669"/>
    <property type="project" value="UniProtKB-UniRule"/>
</dbReference>
<dbReference type="GO" id="GO:0016887">
    <property type="term" value="F:ATP hydrolysis activity"/>
    <property type="evidence" value="ECO:0007669"/>
    <property type="project" value="InterPro"/>
</dbReference>
<dbReference type="GO" id="GO:0008233">
    <property type="term" value="F:peptidase activity"/>
    <property type="evidence" value="ECO:0007669"/>
    <property type="project" value="InterPro"/>
</dbReference>
<dbReference type="GO" id="GO:0036402">
    <property type="term" value="F:proteasome-activating activity"/>
    <property type="evidence" value="ECO:0007669"/>
    <property type="project" value="UniProtKB-UniRule"/>
</dbReference>
<dbReference type="GO" id="GO:0043335">
    <property type="term" value="P:protein unfolding"/>
    <property type="evidence" value="ECO:0007669"/>
    <property type="project" value="UniProtKB-UniRule"/>
</dbReference>
<dbReference type="GO" id="GO:0051603">
    <property type="term" value="P:proteolysis involved in protein catabolic process"/>
    <property type="evidence" value="ECO:0007669"/>
    <property type="project" value="TreeGrafter"/>
</dbReference>
<dbReference type="CDD" id="cd19498">
    <property type="entry name" value="RecA-like_HslU"/>
    <property type="match status" value="1"/>
</dbReference>
<dbReference type="Gene3D" id="1.10.8.60">
    <property type="match status" value="1"/>
</dbReference>
<dbReference type="Gene3D" id="3.40.50.300">
    <property type="entry name" value="P-loop containing nucleotide triphosphate hydrolases"/>
    <property type="match status" value="2"/>
</dbReference>
<dbReference type="HAMAP" id="MF_00249">
    <property type="entry name" value="HslU"/>
    <property type="match status" value="1"/>
</dbReference>
<dbReference type="InterPro" id="IPR003593">
    <property type="entry name" value="AAA+_ATPase"/>
</dbReference>
<dbReference type="InterPro" id="IPR050052">
    <property type="entry name" value="ATP-dep_Clp_protease_ClpX"/>
</dbReference>
<dbReference type="InterPro" id="IPR003959">
    <property type="entry name" value="ATPase_AAA_core"/>
</dbReference>
<dbReference type="InterPro" id="IPR019489">
    <property type="entry name" value="Clp_ATPase_C"/>
</dbReference>
<dbReference type="InterPro" id="IPR004491">
    <property type="entry name" value="HslU"/>
</dbReference>
<dbReference type="InterPro" id="IPR027417">
    <property type="entry name" value="P-loop_NTPase"/>
</dbReference>
<dbReference type="NCBIfam" id="TIGR00390">
    <property type="entry name" value="hslU"/>
    <property type="match status" value="1"/>
</dbReference>
<dbReference type="NCBIfam" id="NF003544">
    <property type="entry name" value="PRK05201.1"/>
    <property type="match status" value="1"/>
</dbReference>
<dbReference type="PANTHER" id="PTHR48102">
    <property type="entry name" value="ATP-DEPENDENT CLP PROTEASE ATP-BINDING SUBUNIT CLPX-LIKE, MITOCHONDRIAL-RELATED"/>
    <property type="match status" value="1"/>
</dbReference>
<dbReference type="PANTHER" id="PTHR48102:SF3">
    <property type="entry name" value="ATP-DEPENDENT PROTEASE ATPASE SUBUNIT HSLU"/>
    <property type="match status" value="1"/>
</dbReference>
<dbReference type="Pfam" id="PF00004">
    <property type="entry name" value="AAA"/>
    <property type="match status" value="1"/>
</dbReference>
<dbReference type="Pfam" id="PF07724">
    <property type="entry name" value="AAA_2"/>
    <property type="match status" value="1"/>
</dbReference>
<dbReference type="SMART" id="SM00382">
    <property type="entry name" value="AAA"/>
    <property type="match status" value="1"/>
</dbReference>
<dbReference type="SMART" id="SM01086">
    <property type="entry name" value="ClpB_D2-small"/>
    <property type="match status" value="1"/>
</dbReference>
<dbReference type="SUPFAM" id="SSF52540">
    <property type="entry name" value="P-loop containing nucleoside triphosphate hydrolases"/>
    <property type="match status" value="1"/>
</dbReference>
<feature type="chain" id="PRO_1000059028" description="ATP-dependent protease ATPase subunit HslU">
    <location>
        <begin position="1"/>
        <end position="462"/>
    </location>
</feature>
<feature type="binding site" evidence="1">
    <location>
        <position position="21"/>
    </location>
    <ligand>
        <name>ATP</name>
        <dbReference type="ChEBI" id="CHEBI:30616"/>
    </ligand>
</feature>
<feature type="binding site" evidence="1">
    <location>
        <begin position="63"/>
        <end position="68"/>
    </location>
    <ligand>
        <name>ATP</name>
        <dbReference type="ChEBI" id="CHEBI:30616"/>
    </ligand>
</feature>
<feature type="binding site" evidence="1">
    <location>
        <position position="275"/>
    </location>
    <ligand>
        <name>ATP</name>
        <dbReference type="ChEBI" id="CHEBI:30616"/>
    </ligand>
</feature>
<feature type="binding site" evidence="1">
    <location>
        <position position="340"/>
    </location>
    <ligand>
        <name>ATP</name>
        <dbReference type="ChEBI" id="CHEBI:30616"/>
    </ligand>
</feature>
<feature type="binding site" evidence="1">
    <location>
        <position position="412"/>
    </location>
    <ligand>
        <name>ATP</name>
        <dbReference type="ChEBI" id="CHEBI:30616"/>
    </ligand>
</feature>
<sequence length="462" mass="52608">MTNFDNLTPKEIVRELDKYIIGQYQAKKAVAIAIRNRIRRQKLPDIWQKEVLPKNILMIGPTGVGKTEIARRLAQLSGSPFLKVEATRFTEVGYVGKNVDSMVRDLVEISVNMVKKERMEQVKDKAEQMVEERILDALIPESRKPQNISFMGLFTASQQQQPSPEERRSLRQKREEIRQKLRNGELENEMIEIEIEKEISPFIGALGQGELEDLGIDLGSMLGSLMPKTRQKKRMTVSEARRTLLPIESEKLIDMDKATQEALERAQNRGIIFIDELDKIAVKSSGSGPDVSRQGVQRDLLPIVEGTTIMTKYGPVRTDYILFIGSGAFHMSRPSDLIPELQGRFPIRVELSSLTRKDFVRILVEPENAITKQYQALLSTEGIELIFTEDGIEEMAKIAYELNQRLENIGARRLYTVVEKVLEEISFEAPDVQEKKIIIDAKYVMGKLENIISDEDVSSYIL</sequence>